<dbReference type="EMBL" id="CP000903">
    <property type="protein sequence ID" value="ABY46252.1"/>
    <property type="molecule type" value="Genomic_DNA"/>
</dbReference>
<dbReference type="RefSeq" id="WP_002130060.1">
    <property type="nucleotide sequence ID" value="NC_010184.1"/>
</dbReference>
<dbReference type="SMR" id="A9VSA6"/>
<dbReference type="GeneID" id="66265136"/>
<dbReference type="KEGG" id="bwe:BcerKBAB4_5106"/>
<dbReference type="eggNOG" id="COG0712">
    <property type="taxonomic scope" value="Bacteria"/>
</dbReference>
<dbReference type="HOGENOM" id="CLU_085114_4_1_9"/>
<dbReference type="Proteomes" id="UP000002154">
    <property type="component" value="Chromosome"/>
</dbReference>
<dbReference type="GO" id="GO:0005886">
    <property type="term" value="C:plasma membrane"/>
    <property type="evidence" value="ECO:0007669"/>
    <property type="project" value="UniProtKB-SubCell"/>
</dbReference>
<dbReference type="GO" id="GO:0045259">
    <property type="term" value="C:proton-transporting ATP synthase complex"/>
    <property type="evidence" value="ECO:0007669"/>
    <property type="project" value="UniProtKB-KW"/>
</dbReference>
<dbReference type="GO" id="GO:0046933">
    <property type="term" value="F:proton-transporting ATP synthase activity, rotational mechanism"/>
    <property type="evidence" value="ECO:0007669"/>
    <property type="project" value="UniProtKB-UniRule"/>
</dbReference>
<dbReference type="Gene3D" id="1.10.520.20">
    <property type="entry name" value="N-terminal domain of the delta subunit of the F1F0-ATP synthase"/>
    <property type="match status" value="1"/>
</dbReference>
<dbReference type="HAMAP" id="MF_01416">
    <property type="entry name" value="ATP_synth_delta_bact"/>
    <property type="match status" value="1"/>
</dbReference>
<dbReference type="InterPro" id="IPR026015">
    <property type="entry name" value="ATP_synth_OSCP/delta_N_sf"/>
</dbReference>
<dbReference type="InterPro" id="IPR020781">
    <property type="entry name" value="ATPase_OSCP/d_CS"/>
</dbReference>
<dbReference type="InterPro" id="IPR000711">
    <property type="entry name" value="ATPase_OSCP/dsu"/>
</dbReference>
<dbReference type="NCBIfam" id="TIGR01145">
    <property type="entry name" value="ATP_synt_delta"/>
    <property type="match status" value="1"/>
</dbReference>
<dbReference type="NCBIfam" id="NF004402">
    <property type="entry name" value="PRK05758.2-2"/>
    <property type="match status" value="1"/>
</dbReference>
<dbReference type="NCBIfam" id="NF004403">
    <property type="entry name" value="PRK05758.2-4"/>
    <property type="match status" value="1"/>
</dbReference>
<dbReference type="PANTHER" id="PTHR11910">
    <property type="entry name" value="ATP SYNTHASE DELTA CHAIN"/>
    <property type="match status" value="1"/>
</dbReference>
<dbReference type="Pfam" id="PF00213">
    <property type="entry name" value="OSCP"/>
    <property type="match status" value="1"/>
</dbReference>
<dbReference type="PRINTS" id="PR00125">
    <property type="entry name" value="ATPASEDELTA"/>
</dbReference>
<dbReference type="SUPFAM" id="SSF47928">
    <property type="entry name" value="N-terminal domain of the delta subunit of the F1F0-ATP synthase"/>
    <property type="match status" value="1"/>
</dbReference>
<dbReference type="PROSITE" id="PS00389">
    <property type="entry name" value="ATPASE_DELTA"/>
    <property type="match status" value="1"/>
</dbReference>
<feature type="chain" id="PRO_0000370895" description="ATP synthase subunit delta">
    <location>
        <begin position="1"/>
        <end position="180"/>
    </location>
</feature>
<evidence type="ECO:0000255" key="1">
    <source>
        <dbReference type="HAMAP-Rule" id="MF_01416"/>
    </source>
</evidence>
<sequence length="180" mass="20465">MSNGIVAKRYAVALFKIAKEKHVLEMFEEELRLVQNVFTKNGELHSFLTQPNISKEQKKTFLANVFASVSESILNTLYILIDNKRIDILPEIANEYVVLANEERNVADATVYSIRLLSEEEKLNIAEAFAKKTGKDAIRVKNVVDEDLLGGIKVRIGNRIYDGSLQGKLARIQRELMKNR</sequence>
<reference key="1">
    <citation type="journal article" date="2008" name="Chem. Biol. Interact.">
        <title>Extending the Bacillus cereus group genomics to putative food-borne pathogens of different toxicity.</title>
        <authorList>
            <person name="Lapidus A."/>
            <person name="Goltsman E."/>
            <person name="Auger S."/>
            <person name="Galleron N."/>
            <person name="Segurens B."/>
            <person name="Dossat C."/>
            <person name="Land M.L."/>
            <person name="Broussolle V."/>
            <person name="Brillard J."/>
            <person name="Guinebretiere M.-H."/>
            <person name="Sanchis V."/>
            <person name="Nguen-the C."/>
            <person name="Lereclus D."/>
            <person name="Richardson P."/>
            <person name="Wincker P."/>
            <person name="Weissenbach J."/>
            <person name="Ehrlich S.D."/>
            <person name="Sorokin A."/>
        </authorList>
    </citation>
    <scope>NUCLEOTIDE SEQUENCE [LARGE SCALE GENOMIC DNA]</scope>
    <source>
        <strain>KBAB4</strain>
    </source>
</reference>
<name>ATPD_BACMK</name>
<organism>
    <name type="scientific">Bacillus mycoides (strain KBAB4)</name>
    <name type="common">Bacillus weihenstephanensis</name>
    <dbReference type="NCBI Taxonomy" id="315730"/>
    <lineage>
        <taxon>Bacteria</taxon>
        <taxon>Bacillati</taxon>
        <taxon>Bacillota</taxon>
        <taxon>Bacilli</taxon>
        <taxon>Bacillales</taxon>
        <taxon>Bacillaceae</taxon>
        <taxon>Bacillus</taxon>
        <taxon>Bacillus cereus group</taxon>
    </lineage>
</organism>
<accession>A9VSA6</accession>
<proteinExistence type="inferred from homology"/>
<protein>
    <recommendedName>
        <fullName evidence="1">ATP synthase subunit delta</fullName>
    </recommendedName>
    <alternativeName>
        <fullName evidence="1">ATP synthase F(1) sector subunit delta</fullName>
    </alternativeName>
    <alternativeName>
        <fullName evidence="1">F-type ATPase subunit delta</fullName>
        <shortName evidence="1">F-ATPase subunit delta</shortName>
    </alternativeName>
</protein>
<comment type="function">
    <text evidence="1">F(1)F(0) ATP synthase produces ATP from ADP in the presence of a proton or sodium gradient. F-type ATPases consist of two structural domains, F(1) containing the extramembraneous catalytic core and F(0) containing the membrane proton channel, linked together by a central stalk and a peripheral stalk. During catalysis, ATP synthesis in the catalytic domain of F(1) is coupled via a rotary mechanism of the central stalk subunits to proton translocation.</text>
</comment>
<comment type="function">
    <text evidence="1">This protein is part of the stalk that links CF(0) to CF(1). It either transmits conformational changes from CF(0) to CF(1) or is implicated in proton conduction.</text>
</comment>
<comment type="subunit">
    <text evidence="1">F-type ATPases have 2 components, F(1) - the catalytic core - and F(0) - the membrane proton channel. F(1) has five subunits: alpha(3), beta(3), gamma(1), delta(1), epsilon(1). F(0) has three main subunits: a(1), b(2) and c(10-14). The alpha and beta chains form an alternating ring which encloses part of the gamma chain. F(1) is attached to F(0) by a central stalk formed by the gamma and epsilon chains, while a peripheral stalk is formed by the delta and b chains.</text>
</comment>
<comment type="subcellular location">
    <subcellularLocation>
        <location evidence="1">Cell membrane</location>
        <topology evidence="1">Peripheral membrane protein</topology>
    </subcellularLocation>
</comment>
<comment type="similarity">
    <text evidence="1">Belongs to the ATPase delta chain family.</text>
</comment>
<gene>
    <name evidence="1" type="primary">atpH</name>
    <name type="ordered locus">BcerKBAB4_5106</name>
</gene>
<keyword id="KW-0066">ATP synthesis</keyword>
<keyword id="KW-1003">Cell membrane</keyword>
<keyword id="KW-0139">CF(1)</keyword>
<keyword id="KW-0375">Hydrogen ion transport</keyword>
<keyword id="KW-0406">Ion transport</keyword>
<keyword id="KW-0472">Membrane</keyword>
<keyword id="KW-0813">Transport</keyword>